<dbReference type="EMBL" id="AF026199">
    <property type="protein sequence ID" value="AAB84100.1"/>
    <property type="molecule type" value="mRNA"/>
</dbReference>
<dbReference type="EMBL" id="AF026200">
    <property type="protein sequence ID" value="AAB84101.1"/>
    <property type="molecule type" value="mRNA"/>
</dbReference>
<dbReference type="EMBL" id="AB002803">
    <property type="protein sequence ID" value="BAA24932.1"/>
    <property type="molecule type" value="mRNA"/>
</dbReference>
<dbReference type="EMBL" id="AF124731">
    <property type="protein sequence ID" value="AAD14689.1"/>
    <property type="molecule type" value="Genomic_DNA"/>
</dbReference>
<dbReference type="EMBL" id="AK313791">
    <property type="protein sequence ID" value="BAG36528.1"/>
    <property type="molecule type" value="mRNA"/>
</dbReference>
<dbReference type="EMBL" id="CR450303">
    <property type="protein sequence ID" value="CAG29299.1"/>
    <property type="molecule type" value="mRNA"/>
</dbReference>
<dbReference type="EMBL" id="AL163249">
    <property type="protein sequence ID" value="CAB90435.1"/>
    <property type="molecule type" value="Genomic_DNA"/>
</dbReference>
<dbReference type="EMBL" id="AP001705">
    <property type="protein sequence ID" value="BAA95505.1"/>
    <property type="molecule type" value="Genomic_DNA"/>
</dbReference>
<dbReference type="EMBL" id="CH471079">
    <property type="protein sequence ID" value="EAX09913.1"/>
    <property type="molecule type" value="Genomic_DNA"/>
</dbReference>
<dbReference type="EMBL" id="BC063307">
    <property type="protein sequence ID" value="AAH63307.1"/>
    <property type="molecule type" value="mRNA"/>
</dbReference>
<dbReference type="CCDS" id="CCDS13585.1"/>
<dbReference type="PIR" id="T00023">
    <property type="entry name" value="T00023"/>
</dbReference>
<dbReference type="RefSeq" id="NP_001177.1">
    <property type="nucleotide sequence ID" value="NM_001186.4"/>
</dbReference>
<dbReference type="RefSeq" id="NP_996749.1">
    <property type="nucleotide sequence ID" value="NM_206866.3"/>
</dbReference>
<dbReference type="PDB" id="2IHC">
    <property type="method" value="X-ray"/>
    <property type="resolution" value="2.44 A"/>
    <property type="chains" value="A/B/C/D=7-128"/>
</dbReference>
<dbReference type="PDB" id="8S7D">
    <property type="method" value="EM"/>
    <property type="resolution" value="3.20 A"/>
    <property type="chains" value="A/B=7-128"/>
</dbReference>
<dbReference type="PDB" id="8UA3">
    <property type="method" value="EM"/>
    <property type="resolution" value="3.80 A"/>
    <property type="chains" value="D/E=7-128"/>
</dbReference>
<dbReference type="PDB" id="8UA6">
    <property type="method" value="EM"/>
    <property type="resolution" value="3.90 A"/>
    <property type="chains" value="D/E=7-128"/>
</dbReference>
<dbReference type="PDB" id="8UAH">
    <property type="method" value="EM"/>
    <property type="resolution" value="3.30 A"/>
    <property type="chains" value="C=7-132"/>
</dbReference>
<dbReference type="PDB" id="8UBT">
    <property type="method" value="EM"/>
    <property type="resolution" value="3.10 A"/>
    <property type="chains" value="D=7-128"/>
</dbReference>
<dbReference type="PDB" id="8UBU">
    <property type="method" value="EM"/>
    <property type="resolution" value="4.60 A"/>
    <property type="chains" value="E/L=7-128"/>
</dbReference>
<dbReference type="PDB" id="8UBV">
    <property type="method" value="EM"/>
    <property type="resolution" value="4.10 A"/>
    <property type="chains" value="C/I=7-128"/>
</dbReference>
<dbReference type="PDB" id="9GP5">
    <property type="method" value="X-ray"/>
    <property type="resolution" value="1.90 A"/>
    <property type="chains" value="C/D=7-128"/>
</dbReference>
<dbReference type="PDB" id="9GR9">
    <property type="method" value="X-ray"/>
    <property type="resolution" value="2.25 A"/>
    <property type="chains" value="A/B/C/D=7-128"/>
</dbReference>
<dbReference type="PDB" id="9GRA">
    <property type="method" value="X-ray"/>
    <property type="resolution" value="1.47 A"/>
    <property type="chains" value="A/B=7-128"/>
</dbReference>
<dbReference type="PDBsum" id="2IHC"/>
<dbReference type="PDBsum" id="8S7D"/>
<dbReference type="PDBsum" id="8UA3"/>
<dbReference type="PDBsum" id="8UA6"/>
<dbReference type="PDBsum" id="8UAH"/>
<dbReference type="PDBsum" id="8UBT"/>
<dbReference type="PDBsum" id="8UBU"/>
<dbReference type="PDBsum" id="8UBV"/>
<dbReference type="PDBsum" id="9GP5"/>
<dbReference type="PDBsum" id="9GR9"/>
<dbReference type="PDBsum" id="9GRA"/>
<dbReference type="EMDB" id="EMD-19766"/>
<dbReference type="EMDB" id="EMD-42049"/>
<dbReference type="EMDB" id="EMD-42051"/>
<dbReference type="EMDB" id="EMD-42064"/>
<dbReference type="EMDB" id="EMD-42102"/>
<dbReference type="EMDB" id="EMD-42105"/>
<dbReference type="EMDB" id="EMD-42106"/>
<dbReference type="SMR" id="O14867"/>
<dbReference type="BioGRID" id="107047">
    <property type="interactions" value="108"/>
</dbReference>
<dbReference type="ComplexPortal" id="CPX-2491">
    <property type="entry name" value="bZIP transcription factor complex, BACH1-FOS"/>
</dbReference>
<dbReference type="ComplexPortal" id="CPX-2493">
    <property type="entry name" value="bZIP transcription factor complex, BACH1-MAFK"/>
</dbReference>
<dbReference type="ComplexPortal" id="CPX-2494">
    <property type="entry name" value="bZIP transcription factor complex, BACH1-CREB1"/>
</dbReference>
<dbReference type="ComplexPortal" id="CPX-2496">
    <property type="entry name" value="bZIP transcription factor complex, BACH1-DDIT3"/>
</dbReference>
<dbReference type="ComplexPortal" id="CPX-2497">
    <property type="entry name" value="bZIP transcription factor complex, BACH1-MAFB"/>
</dbReference>
<dbReference type="ComplexPortal" id="CPX-2500">
    <property type="entry name" value="bZIP transcription factor complex, BACH1-MAF"/>
</dbReference>
<dbReference type="ComplexPortal" id="CPX-2720">
    <property type="entry name" value="bZIP transcription factor complex, BACH1-BACH1"/>
</dbReference>
<dbReference type="ComplexPortal" id="CPX-2872">
    <property type="entry name" value="bZIP transcription factor complex, BACH1-MAFG"/>
</dbReference>
<dbReference type="ComplexPortal" id="CPX-6402">
    <property type="entry name" value="bZIP transcription factor complex, ATF1-BACH1"/>
</dbReference>
<dbReference type="ComplexPortal" id="CPX-6412">
    <property type="entry name" value="bZIP transcription factor complex, ATF2-BACH1"/>
</dbReference>
<dbReference type="ComplexPortal" id="CPX-6781">
    <property type="entry name" value="bZIP transcription factor complex, ATF7-BACH1"/>
</dbReference>
<dbReference type="ComplexPortal" id="CPX-7012">
    <property type="entry name" value="bZIP transcription factor complex, BACH1-BATF"/>
</dbReference>
<dbReference type="ComplexPortal" id="CPX-7165">
    <property type="entry name" value="bZIP transcription factor complex, BACH1-MAFF"/>
</dbReference>
<dbReference type="CORUM" id="O14867"/>
<dbReference type="DIP" id="DIP-24223N"/>
<dbReference type="FunCoup" id="O14867">
    <property type="interactions" value="2468"/>
</dbReference>
<dbReference type="IntAct" id="O14867">
    <property type="interactions" value="74"/>
</dbReference>
<dbReference type="MINT" id="O14867"/>
<dbReference type="STRING" id="9606.ENSP00000382805"/>
<dbReference type="ChEMBL" id="CHEMBL4295651"/>
<dbReference type="iPTMnet" id="O14867"/>
<dbReference type="PhosphoSitePlus" id="O14867"/>
<dbReference type="BioMuta" id="BACH1"/>
<dbReference type="jPOST" id="O14867"/>
<dbReference type="MassIVE" id="O14867"/>
<dbReference type="PaxDb" id="9606-ENSP00000382805"/>
<dbReference type="PeptideAtlas" id="O14867"/>
<dbReference type="ProteomicsDB" id="48277"/>
<dbReference type="Pumba" id="O14867"/>
<dbReference type="Antibodypedia" id="920">
    <property type="antibodies" value="386 antibodies from 38 providers"/>
</dbReference>
<dbReference type="DNASU" id="571"/>
<dbReference type="Ensembl" id="ENST00000286800.8">
    <property type="protein sequence ID" value="ENSP00000286800.3"/>
    <property type="gene ID" value="ENSG00000156273.16"/>
</dbReference>
<dbReference type="Ensembl" id="ENST00000399921.5">
    <property type="protein sequence ID" value="ENSP00000382805.1"/>
    <property type="gene ID" value="ENSG00000156273.16"/>
</dbReference>
<dbReference type="GeneID" id="571"/>
<dbReference type="KEGG" id="hsa:571"/>
<dbReference type="MANE-Select" id="ENST00000286800.8">
    <property type="protein sequence ID" value="ENSP00000286800.3"/>
    <property type="RefSeq nucleotide sequence ID" value="NM_001186.4"/>
    <property type="RefSeq protein sequence ID" value="NP_001177.1"/>
</dbReference>
<dbReference type="UCSC" id="uc002ynj.4">
    <property type="organism name" value="human"/>
</dbReference>
<dbReference type="AGR" id="HGNC:935"/>
<dbReference type="CTD" id="571"/>
<dbReference type="DisGeNET" id="571"/>
<dbReference type="GeneCards" id="BACH1"/>
<dbReference type="HGNC" id="HGNC:935">
    <property type="gene designation" value="BACH1"/>
</dbReference>
<dbReference type="HPA" id="ENSG00000156273">
    <property type="expression patterns" value="Tissue enhanced (bone)"/>
</dbReference>
<dbReference type="MIM" id="602751">
    <property type="type" value="gene"/>
</dbReference>
<dbReference type="neXtProt" id="NX_O14867"/>
<dbReference type="OpenTargets" id="ENSG00000156273"/>
<dbReference type="PharmGKB" id="PA25234"/>
<dbReference type="VEuPathDB" id="HostDB:ENSG00000156273"/>
<dbReference type="eggNOG" id="KOG3863">
    <property type="taxonomic scope" value="Eukaryota"/>
</dbReference>
<dbReference type="GeneTree" id="ENSGT00940000158923"/>
<dbReference type="HOGENOM" id="CLU_015243_2_0_1"/>
<dbReference type="InParanoid" id="O14867"/>
<dbReference type="OMA" id="RRSECPW"/>
<dbReference type="OrthoDB" id="6365358at2759"/>
<dbReference type="PAN-GO" id="O14867">
    <property type="GO annotations" value="3 GO annotations based on evolutionary models"/>
</dbReference>
<dbReference type="PhylomeDB" id="O14867"/>
<dbReference type="TreeFam" id="TF326681"/>
<dbReference type="BRENDA" id="3.6.4.12">
    <property type="organism ID" value="2681"/>
</dbReference>
<dbReference type="PathwayCommons" id="O14867"/>
<dbReference type="Reactome" id="R-HSA-9707587">
    <property type="pathway name" value="Regulation of HMOX1 expression and activity"/>
</dbReference>
<dbReference type="Reactome" id="R-HSA-9707616">
    <property type="pathway name" value="Heme signaling"/>
</dbReference>
<dbReference type="Reactome" id="R-HSA-9708530">
    <property type="pathway name" value="Regulation of BACH1 activity"/>
</dbReference>
<dbReference type="Reactome" id="R-HSA-9818027">
    <property type="pathway name" value="NFE2L2 regulating anti-oxidant/detoxification enzymes"/>
</dbReference>
<dbReference type="SignaLink" id="O14867"/>
<dbReference type="SIGNOR" id="O14867"/>
<dbReference type="BioGRID-ORCS" id="571">
    <property type="hits" value="16 hits in 1215 CRISPR screens"/>
</dbReference>
<dbReference type="ChiTaRS" id="BACH1">
    <property type="organism name" value="human"/>
</dbReference>
<dbReference type="EvolutionaryTrace" id="O14867"/>
<dbReference type="GeneWiki" id="BACH1"/>
<dbReference type="GenomeRNAi" id="571"/>
<dbReference type="Pharos" id="O14867">
    <property type="development level" value="Tbio"/>
</dbReference>
<dbReference type="PRO" id="PR:O14867"/>
<dbReference type="Proteomes" id="UP000005640">
    <property type="component" value="Chromosome 21"/>
</dbReference>
<dbReference type="RNAct" id="O14867">
    <property type="molecule type" value="protein"/>
</dbReference>
<dbReference type="Bgee" id="ENSG00000156273">
    <property type="expression patterns" value="Expressed in secondary oocyte and 180 other cell types or tissues"/>
</dbReference>
<dbReference type="ExpressionAtlas" id="O14867">
    <property type="expression patterns" value="baseline and differential"/>
</dbReference>
<dbReference type="GO" id="GO:0000785">
    <property type="term" value="C:chromatin"/>
    <property type="evidence" value="ECO:0000247"/>
    <property type="project" value="NTNU_SB"/>
</dbReference>
<dbReference type="GO" id="GO:0005737">
    <property type="term" value="C:cytoplasm"/>
    <property type="evidence" value="ECO:0007005"/>
    <property type="project" value="UniProtKB"/>
</dbReference>
<dbReference type="GO" id="GO:0005829">
    <property type="term" value="C:cytosol"/>
    <property type="evidence" value="ECO:0000304"/>
    <property type="project" value="Reactome"/>
</dbReference>
<dbReference type="GO" id="GO:0005654">
    <property type="term" value="C:nucleoplasm"/>
    <property type="evidence" value="ECO:0000304"/>
    <property type="project" value="Reactome"/>
</dbReference>
<dbReference type="GO" id="GO:0005634">
    <property type="term" value="C:nucleus"/>
    <property type="evidence" value="ECO:0000314"/>
    <property type="project" value="UniProtKB"/>
</dbReference>
<dbReference type="GO" id="GO:0090575">
    <property type="term" value="C:RNA polymerase II transcription regulator complex"/>
    <property type="evidence" value="ECO:0000353"/>
    <property type="project" value="ComplexPortal"/>
</dbReference>
<dbReference type="GO" id="GO:0001228">
    <property type="term" value="F:DNA-binding transcription activator activity, RNA polymerase II-specific"/>
    <property type="evidence" value="ECO:0007669"/>
    <property type="project" value="Ensembl"/>
</dbReference>
<dbReference type="GO" id="GO:0003700">
    <property type="term" value="F:DNA-binding transcription factor activity"/>
    <property type="evidence" value="ECO:0000250"/>
    <property type="project" value="UniProtKB"/>
</dbReference>
<dbReference type="GO" id="GO:0000981">
    <property type="term" value="F:DNA-binding transcription factor activity, RNA polymerase II-specific"/>
    <property type="evidence" value="ECO:0000247"/>
    <property type="project" value="NTNU_SB"/>
</dbReference>
<dbReference type="GO" id="GO:0001227">
    <property type="term" value="F:DNA-binding transcription repressor activity, RNA polymerase II-specific"/>
    <property type="evidence" value="ECO:0000314"/>
    <property type="project" value="UniProtKB"/>
</dbReference>
<dbReference type="GO" id="GO:0020037">
    <property type="term" value="F:heme binding"/>
    <property type="evidence" value="ECO:0000303"/>
    <property type="project" value="UniProtKB"/>
</dbReference>
<dbReference type="GO" id="GO:0098531">
    <property type="term" value="F:ligand-modulated transcription factor activity"/>
    <property type="evidence" value="ECO:0000315"/>
    <property type="project" value="UniProtKB"/>
</dbReference>
<dbReference type="GO" id="GO:0000978">
    <property type="term" value="F:RNA polymerase II cis-regulatory region sequence-specific DNA binding"/>
    <property type="evidence" value="ECO:0000318"/>
    <property type="project" value="GO_Central"/>
</dbReference>
<dbReference type="GO" id="GO:0006281">
    <property type="term" value="P:DNA repair"/>
    <property type="evidence" value="ECO:0000315"/>
    <property type="project" value="CACAO"/>
</dbReference>
<dbReference type="GO" id="GO:0000122">
    <property type="term" value="P:negative regulation of transcription by RNA polymerase II"/>
    <property type="evidence" value="ECO:0000314"/>
    <property type="project" value="UniProtKB"/>
</dbReference>
<dbReference type="GO" id="GO:0006355">
    <property type="term" value="P:regulation of DNA-templated transcription"/>
    <property type="evidence" value="ECO:0000250"/>
    <property type="project" value="UniProtKB"/>
</dbReference>
<dbReference type="GO" id="GO:0019222">
    <property type="term" value="P:regulation of metabolic process"/>
    <property type="evidence" value="ECO:0000303"/>
    <property type="project" value="ComplexPortal"/>
</dbReference>
<dbReference type="GO" id="GO:0006357">
    <property type="term" value="P:regulation of transcription by RNA polymerase II"/>
    <property type="evidence" value="ECO:0000318"/>
    <property type="project" value="GO_Central"/>
</dbReference>
<dbReference type="CDD" id="cd18277">
    <property type="entry name" value="BTB_POZ_BACH1"/>
    <property type="match status" value="1"/>
</dbReference>
<dbReference type="CDD" id="cd14719">
    <property type="entry name" value="bZIP_BACH"/>
    <property type="match status" value="1"/>
</dbReference>
<dbReference type="FunFam" id="1.10.880.10:FF:000002">
    <property type="entry name" value="transcription regulator protein BACH2 isoform X1"/>
    <property type="match status" value="1"/>
</dbReference>
<dbReference type="FunFam" id="3.30.710.10:FF:000033">
    <property type="entry name" value="transcription regulator protein BACH2 isoform X1"/>
    <property type="match status" value="1"/>
</dbReference>
<dbReference type="Gene3D" id="3.30.710.10">
    <property type="entry name" value="Potassium Channel Kv1.1, Chain A"/>
    <property type="match status" value="1"/>
</dbReference>
<dbReference type="Gene3D" id="1.10.880.10">
    <property type="entry name" value="Transcription factor, Skn-1-like, DNA-binding domain"/>
    <property type="match status" value="1"/>
</dbReference>
<dbReference type="InterPro" id="IPR000210">
    <property type="entry name" value="BTB/POZ_dom"/>
</dbReference>
<dbReference type="InterPro" id="IPR004827">
    <property type="entry name" value="bZIP"/>
</dbReference>
<dbReference type="InterPro" id="IPR043321">
    <property type="entry name" value="bZIP_BACH"/>
</dbReference>
<dbReference type="InterPro" id="IPR004826">
    <property type="entry name" value="bZIP_Maf"/>
</dbReference>
<dbReference type="InterPro" id="IPR046347">
    <property type="entry name" value="bZIP_sf"/>
</dbReference>
<dbReference type="InterPro" id="IPR011333">
    <property type="entry name" value="SKP1/BTB/POZ_sf"/>
</dbReference>
<dbReference type="InterPro" id="IPR008917">
    <property type="entry name" value="TF_DNA-bd_sf"/>
</dbReference>
<dbReference type="InterPro" id="IPR050457">
    <property type="entry name" value="ZnFinger_BTB_dom_contain"/>
</dbReference>
<dbReference type="PANTHER" id="PTHR46105">
    <property type="entry name" value="AGAP004733-PA"/>
    <property type="match status" value="1"/>
</dbReference>
<dbReference type="PANTHER" id="PTHR46105:SF1">
    <property type="entry name" value="TRANSCRIPTION REGULATOR PROTEIN BACH1"/>
    <property type="match status" value="1"/>
</dbReference>
<dbReference type="Pfam" id="PF00651">
    <property type="entry name" value="BTB"/>
    <property type="match status" value="1"/>
</dbReference>
<dbReference type="Pfam" id="PF03131">
    <property type="entry name" value="bZIP_Maf"/>
    <property type="match status" value="1"/>
</dbReference>
<dbReference type="SMART" id="SM00338">
    <property type="entry name" value="BRLZ"/>
    <property type="match status" value="1"/>
</dbReference>
<dbReference type="SMART" id="SM00225">
    <property type="entry name" value="BTB"/>
    <property type="match status" value="1"/>
</dbReference>
<dbReference type="SUPFAM" id="SSF47454">
    <property type="entry name" value="A DNA-binding domain in eukaryotic transcription factors"/>
    <property type="match status" value="1"/>
</dbReference>
<dbReference type="SUPFAM" id="SSF57959">
    <property type="entry name" value="Leucine zipper domain"/>
    <property type="match status" value="1"/>
</dbReference>
<dbReference type="SUPFAM" id="SSF54695">
    <property type="entry name" value="POZ domain"/>
    <property type="match status" value="1"/>
</dbReference>
<dbReference type="PROSITE" id="PS50097">
    <property type="entry name" value="BTB"/>
    <property type="match status" value="1"/>
</dbReference>
<dbReference type="PROSITE" id="PS50217">
    <property type="entry name" value="BZIP"/>
    <property type="match status" value="1"/>
</dbReference>
<dbReference type="PROSITE" id="PS00036">
    <property type="entry name" value="BZIP_BASIC"/>
    <property type="match status" value="1"/>
</dbReference>
<name>BACH1_HUMAN</name>
<accession>O14867</accession>
<accession>O43285</accession>
<accession>Q6ICU0</accession>
<evidence type="ECO:0000250" key="1">
    <source>
        <dbReference type="UniProtKB" id="P97302"/>
    </source>
</evidence>
<evidence type="ECO:0000255" key="2">
    <source>
        <dbReference type="PROSITE-ProRule" id="PRU00037"/>
    </source>
</evidence>
<evidence type="ECO:0000255" key="3">
    <source>
        <dbReference type="PROSITE-ProRule" id="PRU00978"/>
    </source>
</evidence>
<evidence type="ECO:0000256" key="4">
    <source>
        <dbReference type="SAM" id="MobiDB-lite"/>
    </source>
</evidence>
<evidence type="ECO:0000269" key="5">
    <source>
    </source>
</evidence>
<evidence type="ECO:0000269" key="6">
    <source>
    </source>
</evidence>
<evidence type="ECO:0000303" key="7">
    <source>
    </source>
</evidence>
<evidence type="ECO:0000305" key="8"/>
<evidence type="ECO:0000312" key="9">
    <source>
        <dbReference type="EMBL" id="BAG36528.1"/>
    </source>
</evidence>
<evidence type="ECO:0000312" key="10">
    <source>
        <dbReference type="HGNC" id="HGNC:935"/>
    </source>
</evidence>
<evidence type="ECO:0007744" key="11">
    <source>
    </source>
</evidence>
<evidence type="ECO:0007744" key="12">
    <source>
    </source>
</evidence>
<evidence type="ECO:0007744" key="13">
    <source>
    </source>
</evidence>
<evidence type="ECO:0007829" key="14">
    <source>
        <dbReference type="PDB" id="9GR9"/>
    </source>
</evidence>
<organism>
    <name type="scientific">Homo sapiens</name>
    <name type="common">Human</name>
    <dbReference type="NCBI Taxonomy" id="9606"/>
    <lineage>
        <taxon>Eukaryota</taxon>
        <taxon>Metazoa</taxon>
        <taxon>Chordata</taxon>
        <taxon>Craniata</taxon>
        <taxon>Vertebrata</taxon>
        <taxon>Euteleostomi</taxon>
        <taxon>Mammalia</taxon>
        <taxon>Eutheria</taxon>
        <taxon>Euarchontoglires</taxon>
        <taxon>Primates</taxon>
        <taxon>Haplorrhini</taxon>
        <taxon>Catarrhini</taxon>
        <taxon>Hominidae</taxon>
        <taxon>Homo</taxon>
    </lineage>
</organism>
<comment type="function">
    <text evidence="1 5 6">Transcriptional regulator that acts as a repressor or activator, depending on the context. Binds to NF-E2 DNA binding sites. Plays important roles in coordinating transcription activation and repression by MAFK (By similarity). Together with MAF, represses the transcription of genes under the control of the NFE2L2 oxidative stress pathway (PubMed:24035498).</text>
</comment>
<comment type="subunit">
    <text evidence="1">Heterodimer of BACH1 and MAFK.</text>
</comment>
<comment type="interaction">
    <interactant intactId="EBI-1263541">
        <id>O14867</id>
    </interactant>
    <interactant intactId="EBI-1170906">
        <id>P15336</id>
        <label>ATF2</label>
    </interactant>
    <organismsDiffer>false</organismsDiffer>
    <experiments>3</experiments>
</comment>
<comment type="interaction">
    <interactant intactId="EBI-1263541">
        <id>O14867</id>
    </interactant>
    <interactant intactId="EBI-765623">
        <id>P17544</id>
        <label>ATF7</label>
    </interactant>
    <organismsDiffer>false</organismsDiffer>
    <experiments>3</experiments>
</comment>
<comment type="interaction">
    <interactant intactId="EBI-1263541">
        <id>O14867</id>
    </interactant>
    <interactant intactId="EBI-742651">
        <id>P35638</id>
        <label>DDIT3</label>
    </interactant>
    <organismsDiffer>false</organismsDiffer>
    <experiments>2</experiments>
</comment>
<comment type="interaction">
    <interactant intactId="EBI-1263541">
        <id>O14867</id>
    </interactant>
    <interactant intactId="EBI-349105">
        <id>P63167</id>
        <label>DYNLL1</label>
    </interactant>
    <organismsDiffer>false</organismsDiffer>
    <experiments>3</experiments>
</comment>
<comment type="interaction">
    <interactant intactId="EBI-1263541">
        <id>O14867</id>
    </interactant>
    <interactant intactId="EBI-2805091">
        <id>O75444</id>
        <label>MAF</label>
    </interactant>
    <organismsDiffer>false</organismsDiffer>
    <experiments>2</experiments>
</comment>
<comment type="interaction">
    <interactant intactId="EBI-1263541">
        <id>O14867</id>
    </interactant>
    <interactant intactId="EBI-3649340">
        <id>Q9Y5Q3</id>
        <label>MAFB</label>
    </interactant>
    <organismsDiffer>false</organismsDiffer>
    <experiments>5</experiments>
</comment>
<comment type="interaction">
    <interactant intactId="EBI-1263541">
        <id>O14867</id>
    </interactant>
    <interactant intactId="EBI-721128">
        <id>Q9ULX9</id>
        <label>MAFF</label>
    </interactant>
    <organismsDiffer>false</organismsDiffer>
    <experiments>6</experiments>
</comment>
<comment type="interaction">
    <interactant intactId="EBI-1263541">
        <id>O14867</id>
    </interactant>
    <interactant intactId="EBI-713514">
        <id>O15525</id>
        <label>MAFG</label>
    </interactant>
    <organismsDiffer>false</organismsDiffer>
    <experiments>8</experiments>
</comment>
<comment type="interaction">
    <interactant intactId="EBI-1263541">
        <id>O14867</id>
    </interactant>
    <interactant intactId="EBI-21251460">
        <id>O60260-5</id>
        <label>PRKN</label>
    </interactant>
    <organismsDiffer>false</organismsDiffer>
    <experiments>3</experiments>
</comment>
<comment type="interaction">
    <interactant intactId="EBI-1263541">
        <id>O14867</id>
    </interactant>
    <interactant intactId="EBI-12157263">
        <id>P40337-2</id>
        <label>VHL</label>
    </interactant>
    <organismsDiffer>false</organismsDiffer>
    <experiments>3</experiments>
</comment>
<comment type="interaction">
    <interactant intactId="EBI-1263541">
        <id>O14867</id>
    </interactant>
    <interactant intactId="EBI-10889526">
        <id>Q9DGW5</id>
        <label>MDV005</label>
    </interactant>
    <organismsDiffer>true</organismsDiffer>
    <experiments>2</experiments>
</comment>
<comment type="subcellular location">
    <subcellularLocation>
        <location evidence="3 5">Nucleus</location>
    </subcellularLocation>
</comment>
<comment type="PTM">
    <text evidence="5 6">Ubiquitinated by the SCF(FBXL17) complex or by the by the SCF(FBXO22) complex, leading to its degradation by the proteasome. Under oxidative stress, reactive oxygen species covalently modify cysteine residues on the bZIP domain of BACH1 and release it from chromatin. If the BTB domain of BACH1 remains intact, its beta1-alpha6 degron is recognized by FBXO22, promoting its ubiquitination and degradation. If the structural integrity of the beta1-alpha6 degron is compromised, FBXL17 will transiently associate with the BACH1 BTB dimer and remodel it into stably bound monomer for ubiquitination and degradation (PubMed:39504958).</text>
</comment>
<comment type="similarity">
    <text evidence="8">Belongs to the bZIP family. CNC subfamily.</text>
</comment>
<protein>
    <recommendedName>
        <fullName evidence="8">Transcription regulator protein BACH1</fullName>
    </recommendedName>
    <alternativeName>
        <fullName evidence="7">BTB and CNC homolog 1</fullName>
    </alternativeName>
    <alternativeName>
        <fullName>HA2303</fullName>
    </alternativeName>
</protein>
<gene>
    <name evidence="7 10" type="primary">BACH1</name>
</gene>
<proteinExistence type="evidence at protein level"/>
<keyword id="KW-0002">3D-structure</keyword>
<keyword id="KW-0010">Activator</keyword>
<keyword id="KW-0238">DNA-binding</keyword>
<keyword id="KW-0539">Nucleus</keyword>
<keyword id="KW-0597">Phosphoprotein</keyword>
<keyword id="KW-1267">Proteomics identification</keyword>
<keyword id="KW-1185">Reference proteome</keyword>
<keyword id="KW-0678">Repressor</keyword>
<keyword id="KW-0804">Transcription</keyword>
<keyword id="KW-0805">Transcription regulation</keyword>
<keyword id="KW-0832">Ubl conjugation</keyword>
<sequence length="736" mass="81958">MSLSENSVFAYESSVHSTNVLLSLNDQRKKDVLCDVTIFVEGQRFRAHRSVLAACSSYFHSRIVGQADGELNITLPEEVTVKGFEPLIQFAYTAKLILSKENVDEVCKCVEFLSVHNIEESCFQFLKFKFLDSTADQQECPRKKCFSSHCQKTDLKLSLLDQRDLETDEVEEFLENKNVQTPQCKLRRYQGNAKASPPLQDSASQTYESMCLEKDAALALPSLCPKYRKFQKAFGTDRVRTGESSVKDIHASVQPNERSENECLGGVPECRDLQVMLKCDESKLAMEPEETKKDPASQCPTEKSEVTPFPHNSSIDPHGLYSLSLLHTYDQYGDLNFAGMQNTTVLTEKPLSGTDVQEKTFGESQDLPLKSDLGTREDSSVASSDRSSVEREVAEHLAKGFWSDICSTDTPCQMQLSPAVAKDGSEQISQKRSECPWLGIRISESPEPGQRTFTTLSSVNCPFISTLSTEGCSSNLEIGNDDYVSEPQQEPCPYACVISLGDDSETDTEGDSESCSAREQECEVKLPFNAQRIISLSRNDFQSLLKMHKLTPEQLDCIHDIRRRSKNRIAAQRCRKRKLDCIQNLESEIEKLQSEKESLLKERDHILSTLGETKQNLTGLCQKVCKEAALSQEQIQILAKYSAADCPLSFLISEKDKSTPDGELALPSIFSLSDRPPAVLPPCARGNSEPGYARGQESQQMSTATSEQAGPAEQCRQSGGISDFCQQMTDKCTTDE</sequence>
<reference key="1">
    <citation type="journal article" date="1998" name="Hum. Genet.">
        <title>Isolation of the human BACH1 transcription regulator gene, which maps to chromosome 21q22.1.</title>
        <authorList>
            <person name="Blouin J.-L."/>
            <person name="Duriaux Sail G."/>
            <person name="Guipponi M."/>
            <person name="Rossier C."/>
            <person name="Pappasavas M.-P."/>
            <person name="Antonarakis S.E."/>
        </authorList>
    </citation>
    <scope>NUCLEOTIDE SEQUENCE [MRNA]</scope>
</reference>
<reference key="2">
    <citation type="journal article" date="1998" name="Genomics">
        <title>Characterization of a human homolog (BACH1) of the mouse Bach1 gene encoding a BTB-basic leucine zipper transcription factor and its mapping to chromosome 21q22.1.</title>
        <authorList>
            <person name="Ohira M."/>
            <person name="Seki N."/>
            <person name="Nagase T."/>
            <person name="Ishikawa K."/>
            <person name="Nomura N."/>
            <person name="Ohara O."/>
        </authorList>
    </citation>
    <scope>NUCLEOTIDE SEQUENCE [MRNA]</scope>
</reference>
<reference key="3">
    <citation type="submission" date="1999-01" db="EMBL/GenBank/DDBJ databases">
        <authorList>
            <person name="Taudien S."/>
            <person name="Dagand E."/>
            <person name="Delabar J."/>
            <person name="Nordsiek G."/>
            <person name="Drescher B."/>
            <person name="Weber J."/>
            <person name="Schattevoy R."/>
            <person name="Yaspo M.-L."/>
            <person name="Rosenthal A."/>
        </authorList>
    </citation>
    <scope>NUCLEOTIDE SEQUENCE [GENOMIC DNA]</scope>
</reference>
<reference key="4">
    <citation type="journal article" date="2004" name="Nat. Genet.">
        <title>Complete sequencing and characterization of 21,243 full-length human cDNAs.</title>
        <authorList>
            <person name="Ota T."/>
            <person name="Suzuki Y."/>
            <person name="Nishikawa T."/>
            <person name="Otsuki T."/>
            <person name="Sugiyama T."/>
            <person name="Irie R."/>
            <person name="Wakamatsu A."/>
            <person name="Hayashi K."/>
            <person name="Sato H."/>
            <person name="Nagai K."/>
            <person name="Kimura K."/>
            <person name="Makita H."/>
            <person name="Sekine M."/>
            <person name="Obayashi M."/>
            <person name="Nishi T."/>
            <person name="Shibahara T."/>
            <person name="Tanaka T."/>
            <person name="Ishii S."/>
            <person name="Yamamoto J."/>
            <person name="Saito K."/>
            <person name="Kawai Y."/>
            <person name="Isono Y."/>
            <person name="Nakamura Y."/>
            <person name="Nagahari K."/>
            <person name="Murakami K."/>
            <person name="Yasuda T."/>
            <person name="Iwayanagi T."/>
            <person name="Wagatsuma M."/>
            <person name="Shiratori A."/>
            <person name="Sudo H."/>
            <person name="Hosoiri T."/>
            <person name="Kaku Y."/>
            <person name="Kodaira H."/>
            <person name="Kondo H."/>
            <person name="Sugawara M."/>
            <person name="Takahashi M."/>
            <person name="Kanda K."/>
            <person name="Yokoi T."/>
            <person name="Furuya T."/>
            <person name="Kikkawa E."/>
            <person name="Omura Y."/>
            <person name="Abe K."/>
            <person name="Kamihara K."/>
            <person name="Katsuta N."/>
            <person name="Sato K."/>
            <person name="Tanikawa M."/>
            <person name="Yamazaki M."/>
            <person name="Ninomiya K."/>
            <person name="Ishibashi T."/>
            <person name="Yamashita H."/>
            <person name="Murakawa K."/>
            <person name="Fujimori K."/>
            <person name="Tanai H."/>
            <person name="Kimata M."/>
            <person name="Watanabe M."/>
            <person name="Hiraoka S."/>
            <person name="Chiba Y."/>
            <person name="Ishida S."/>
            <person name="Ono Y."/>
            <person name="Takiguchi S."/>
            <person name="Watanabe S."/>
            <person name="Yosida M."/>
            <person name="Hotuta T."/>
            <person name="Kusano J."/>
            <person name="Kanehori K."/>
            <person name="Takahashi-Fujii A."/>
            <person name="Hara H."/>
            <person name="Tanase T.-O."/>
            <person name="Nomura Y."/>
            <person name="Togiya S."/>
            <person name="Komai F."/>
            <person name="Hara R."/>
            <person name="Takeuchi K."/>
            <person name="Arita M."/>
            <person name="Imose N."/>
            <person name="Musashino K."/>
            <person name="Yuuki H."/>
            <person name="Oshima A."/>
            <person name="Sasaki N."/>
            <person name="Aotsuka S."/>
            <person name="Yoshikawa Y."/>
            <person name="Matsunawa H."/>
            <person name="Ichihara T."/>
            <person name="Shiohata N."/>
            <person name="Sano S."/>
            <person name="Moriya S."/>
            <person name="Momiyama H."/>
            <person name="Satoh N."/>
            <person name="Takami S."/>
            <person name="Terashima Y."/>
            <person name="Suzuki O."/>
            <person name="Nakagawa S."/>
            <person name="Senoh A."/>
            <person name="Mizoguchi H."/>
            <person name="Goto Y."/>
            <person name="Shimizu F."/>
            <person name="Wakebe H."/>
            <person name="Hishigaki H."/>
            <person name="Watanabe T."/>
            <person name="Sugiyama A."/>
            <person name="Takemoto M."/>
            <person name="Kawakami B."/>
            <person name="Yamazaki M."/>
            <person name="Watanabe K."/>
            <person name="Kumagai A."/>
            <person name="Itakura S."/>
            <person name="Fukuzumi Y."/>
            <person name="Fujimori Y."/>
            <person name="Komiyama M."/>
            <person name="Tashiro H."/>
            <person name="Tanigami A."/>
            <person name="Fujiwara T."/>
            <person name="Ono T."/>
            <person name="Yamada K."/>
            <person name="Fujii Y."/>
            <person name="Ozaki K."/>
            <person name="Hirao M."/>
            <person name="Ohmori Y."/>
            <person name="Kawabata A."/>
            <person name="Hikiji T."/>
            <person name="Kobatake N."/>
            <person name="Inagaki H."/>
            <person name="Ikema Y."/>
            <person name="Okamoto S."/>
            <person name="Okitani R."/>
            <person name="Kawakami T."/>
            <person name="Noguchi S."/>
            <person name="Itoh T."/>
            <person name="Shigeta K."/>
            <person name="Senba T."/>
            <person name="Matsumura K."/>
            <person name="Nakajima Y."/>
            <person name="Mizuno T."/>
            <person name="Morinaga M."/>
            <person name="Sasaki M."/>
            <person name="Togashi T."/>
            <person name="Oyama M."/>
            <person name="Hata H."/>
            <person name="Watanabe M."/>
            <person name="Komatsu T."/>
            <person name="Mizushima-Sugano J."/>
            <person name="Satoh T."/>
            <person name="Shirai Y."/>
            <person name="Takahashi Y."/>
            <person name="Nakagawa K."/>
            <person name="Okumura K."/>
            <person name="Nagase T."/>
            <person name="Nomura N."/>
            <person name="Kikuchi H."/>
            <person name="Masuho Y."/>
            <person name="Yamashita R."/>
            <person name="Nakai K."/>
            <person name="Yada T."/>
            <person name="Nakamura Y."/>
            <person name="Ohara O."/>
            <person name="Isogai T."/>
            <person name="Sugano S."/>
        </authorList>
    </citation>
    <scope>NUCLEOTIDE SEQUENCE [LARGE SCALE MRNA]</scope>
    <source>
        <tissue evidence="9">Trachea</tissue>
    </source>
</reference>
<reference key="5">
    <citation type="submission" date="2004-05" db="EMBL/GenBank/DDBJ databases">
        <title>Cloning of human full open reading frames in Gateway(TM) system entry vector (pDONR201).</title>
        <authorList>
            <person name="Ebert L."/>
            <person name="Schick M."/>
            <person name="Neubert P."/>
            <person name="Schatten R."/>
            <person name="Henze S."/>
            <person name="Korn B."/>
        </authorList>
    </citation>
    <scope>NUCLEOTIDE SEQUENCE [LARGE SCALE MRNA]</scope>
</reference>
<reference key="6">
    <citation type="journal article" date="2000" name="Nature">
        <title>The DNA sequence of human chromosome 21.</title>
        <authorList>
            <person name="Hattori M."/>
            <person name="Fujiyama A."/>
            <person name="Taylor T.D."/>
            <person name="Watanabe H."/>
            <person name="Yada T."/>
            <person name="Park H.-S."/>
            <person name="Toyoda A."/>
            <person name="Ishii K."/>
            <person name="Totoki Y."/>
            <person name="Choi D.-K."/>
            <person name="Groner Y."/>
            <person name="Soeda E."/>
            <person name="Ohki M."/>
            <person name="Takagi T."/>
            <person name="Sakaki Y."/>
            <person name="Taudien S."/>
            <person name="Blechschmidt K."/>
            <person name="Polley A."/>
            <person name="Menzel U."/>
            <person name="Delabar J."/>
            <person name="Kumpf K."/>
            <person name="Lehmann R."/>
            <person name="Patterson D."/>
            <person name="Reichwald K."/>
            <person name="Rump A."/>
            <person name="Schillhabel M."/>
            <person name="Schudy A."/>
            <person name="Zimmermann W."/>
            <person name="Rosenthal A."/>
            <person name="Kudoh J."/>
            <person name="Shibuya K."/>
            <person name="Kawasaki K."/>
            <person name="Asakawa S."/>
            <person name="Shintani A."/>
            <person name="Sasaki T."/>
            <person name="Nagamine K."/>
            <person name="Mitsuyama S."/>
            <person name="Antonarakis S.E."/>
            <person name="Minoshima S."/>
            <person name="Shimizu N."/>
            <person name="Nordsiek G."/>
            <person name="Hornischer K."/>
            <person name="Brandt P."/>
            <person name="Scharfe M."/>
            <person name="Schoen O."/>
            <person name="Desario A."/>
            <person name="Reichelt J."/>
            <person name="Kauer G."/>
            <person name="Bloecker H."/>
            <person name="Ramser J."/>
            <person name="Beck A."/>
            <person name="Klages S."/>
            <person name="Hennig S."/>
            <person name="Riesselmann L."/>
            <person name="Dagand E."/>
            <person name="Wehrmeyer S."/>
            <person name="Borzym K."/>
            <person name="Gardiner K."/>
            <person name="Nizetic D."/>
            <person name="Francis F."/>
            <person name="Lehrach H."/>
            <person name="Reinhardt R."/>
            <person name="Yaspo M.-L."/>
        </authorList>
    </citation>
    <scope>NUCLEOTIDE SEQUENCE [LARGE SCALE GENOMIC DNA]</scope>
</reference>
<reference key="7">
    <citation type="submission" date="2005-09" db="EMBL/GenBank/DDBJ databases">
        <authorList>
            <person name="Mural R.J."/>
            <person name="Istrail S."/>
            <person name="Sutton G.G."/>
            <person name="Florea L."/>
            <person name="Halpern A.L."/>
            <person name="Mobarry C.M."/>
            <person name="Lippert R."/>
            <person name="Walenz B."/>
            <person name="Shatkay H."/>
            <person name="Dew I."/>
            <person name="Miller J.R."/>
            <person name="Flanigan M.J."/>
            <person name="Edwards N.J."/>
            <person name="Bolanos R."/>
            <person name="Fasulo D."/>
            <person name="Halldorsson B.V."/>
            <person name="Hannenhalli S."/>
            <person name="Turner R."/>
            <person name="Yooseph S."/>
            <person name="Lu F."/>
            <person name="Nusskern D.R."/>
            <person name="Shue B.C."/>
            <person name="Zheng X.H."/>
            <person name="Zhong F."/>
            <person name="Delcher A.L."/>
            <person name="Huson D.H."/>
            <person name="Kravitz S.A."/>
            <person name="Mouchard L."/>
            <person name="Reinert K."/>
            <person name="Remington K.A."/>
            <person name="Clark A.G."/>
            <person name="Waterman M.S."/>
            <person name="Eichler E.E."/>
            <person name="Adams M.D."/>
            <person name="Hunkapiller M.W."/>
            <person name="Myers E.W."/>
            <person name="Venter J.C."/>
        </authorList>
    </citation>
    <scope>NUCLEOTIDE SEQUENCE [LARGE SCALE GENOMIC DNA]</scope>
</reference>
<reference key="8">
    <citation type="journal article" date="2004" name="Genome Res.">
        <title>The status, quality, and expansion of the NIH full-length cDNA project: the Mammalian Gene Collection (MGC).</title>
        <authorList>
            <consortium name="The MGC Project Team"/>
        </authorList>
    </citation>
    <scope>NUCLEOTIDE SEQUENCE [LARGE SCALE MRNA]</scope>
    <source>
        <tissue>Placenta</tissue>
    </source>
</reference>
<reference key="9">
    <citation type="journal article" date="2006" name="Nat. Biotechnol.">
        <title>A probability-based approach for high-throughput protein phosphorylation analysis and site localization.</title>
        <authorList>
            <person name="Beausoleil S.A."/>
            <person name="Villen J."/>
            <person name="Gerber S.A."/>
            <person name="Rush J."/>
            <person name="Gygi S.P."/>
        </authorList>
    </citation>
    <scope>PHOSPHORYLATION [LARGE SCALE ANALYSIS] AT SER-445</scope>
    <scope>IDENTIFICATION BY MASS SPECTROMETRY [LARGE SCALE ANALYSIS]</scope>
    <source>
        <tissue>Cervix carcinoma</tissue>
    </source>
</reference>
<reference key="10">
    <citation type="journal article" date="2008" name="Proc. Natl. Acad. Sci. U.S.A.">
        <title>A quantitative atlas of mitotic phosphorylation.</title>
        <authorList>
            <person name="Dephoure N."/>
            <person name="Zhou C."/>
            <person name="Villen J."/>
            <person name="Beausoleil S.A."/>
            <person name="Bakalarski C.E."/>
            <person name="Elledge S.J."/>
            <person name="Gygi S.P."/>
        </authorList>
    </citation>
    <scope>PHOSPHORYLATION [LARGE SCALE ANALYSIS] AT SER-445</scope>
    <scope>IDENTIFICATION BY MASS SPECTROMETRY [LARGE SCALE ANALYSIS]</scope>
    <source>
        <tissue>Cervix carcinoma</tissue>
    </source>
</reference>
<reference key="11">
    <citation type="journal article" date="2013" name="J. Proteome Res.">
        <title>Toward a comprehensive characterization of a human cancer cell phosphoproteome.</title>
        <authorList>
            <person name="Zhou H."/>
            <person name="Di Palma S."/>
            <person name="Preisinger C."/>
            <person name="Peng M."/>
            <person name="Polat A.N."/>
            <person name="Heck A.J."/>
            <person name="Mohammed S."/>
        </authorList>
    </citation>
    <scope>PHOSPHORYLATION [LARGE SCALE ANALYSIS] AT SER-196; SER-364 AND SER-445</scope>
    <scope>IDENTIFICATION BY MASS SPECTROMETRY [LARGE SCALE ANALYSIS]</scope>
    <source>
        <tissue>Cervix carcinoma</tissue>
        <tissue>Erythroleukemia</tissue>
    </source>
</reference>
<reference key="12">
    <citation type="journal article" date="2013" name="Mol. Cell">
        <title>Parallel SCF adaptor capture proteomics reveals a role for SCFFBXL17 in NRF2 activation via BACH1 repressor turnover.</title>
        <authorList>
            <person name="Tan M.K."/>
            <person name="Lim H.J."/>
            <person name="Bennett E.J."/>
            <person name="Shi Y."/>
            <person name="Harper J.W."/>
        </authorList>
    </citation>
    <scope>FUNCTION</scope>
    <scope>SUBCELLULAR LOCATION</scope>
    <scope>UBIQUITINATION</scope>
</reference>
<reference key="13">
    <citation type="journal article" date="2024" name="Cell">
        <title>Recognition of BACH1 quaternary structure degrons by two F-box proteins under oxidative stress.</title>
        <authorList>
            <person name="Cao S."/>
            <person name="Garcia S.F."/>
            <person name="Shi H."/>
            <person name="James E.I."/>
            <person name="Kito Y."/>
            <person name="Shi H."/>
            <person name="Mao H."/>
            <person name="Kaisari S."/>
            <person name="Rona G."/>
            <person name="Deng S."/>
            <person name="Goldberg H.V."/>
            <person name="Ponce J."/>
            <person name="Ueberheide B."/>
            <person name="Lignitto L."/>
            <person name="Guttman M."/>
            <person name="Pagano M."/>
            <person name="Zheng N."/>
        </authorList>
    </citation>
    <scope>FUNCTION</scope>
    <scope>INTERACTION WITH FBXO22 AND FBXL17</scope>
</reference>
<reference key="14">
    <citation type="submission" date="2009-02" db="PDB data bank">
        <title>Crystal structure of the bric-a-brac (BTB) domain of human BACH1.</title>
        <authorList>
            <consortium name="Structural genomics consortium (SGC)"/>
        </authorList>
    </citation>
    <scope>X-RAY CRYSTALLOGRAPHY (2.44 ANGSTROMS) OF 7-128</scope>
</reference>
<feature type="chain" id="PRO_0000076454" description="Transcription regulator protein BACH1">
    <location>
        <begin position="1"/>
        <end position="736"/>
    </location>
</feature>
<feature type="domain" description="BTB" evidence="2">
    <location>
        <begin position="34"/>
        <end position="100"/>
    </location>
</feature>
<feature type="domain" description="bZIP" evidence="3">
    <location>
        <begin position="557"/>
        <end position="620"/>
    </location>
</feature>
<feature type="region of interest" description="Disordered" evidence="4">
    <location>
        <begin position="286"/>
        <end position="312"/>
    </location>
</feature>
<feature type="region of interest" description="Disordered" evidence="4">
    <location>
        <begin position="349"/>
        <end position="389"/>
    </location>
</feature>
<feature type="region of interest" description="Basic motif" evidence="3">
    <location>
        <begin position="562"/>
        <end position="578"/>
    </location>
</feature>
<feature type="region of interest" description="Leucine-zipper" evidence="3">
    <location>
        <begin position="582"/>
        <end position="589"/>
    </location>
</feature>
<feature type="region of interest" description="Disordered" evidence="4">
    <location>
        <begin position="680"/>
        <end position="719"/>
    </location>
</feature>
<feature type="compositionally biased region" description="Basic and acidic residues" evidence="4">
    <location>
        <begin position="286"/>
        <end position="295"/>
    </location>
</feature>
<feature type="compositionally biased region" description="Polar residues" evidence="4">
    <location>
        <begin position="696"/>
        <end position="708"/>
    </location>
</feature>
<feature type="modified residue" description="Phosphoserine" evidence="13">
    <location>
        <position position="196"/>
    </location>
</feature>
<feature type="modified residue" description="Phosphoserine" evidence="13">
    <location>
        <position position="364"/>
    </location>
</feature>
<feature type="modified residue" description="Phosphoserine" evidence="11 12 13">
    <location>
        <position position="445"/>
    </location>
</feature>
<feature type="sequence variant" id="VAR_048441" description="In dbSNP:rs35474725.">
    <original>S</original>
    <variation>P</variation>
    <location>
        <position position="314"/>
    </location>
</feature>
<feature type="sequence conflict" description="In Ref. 1; AAB84100." evidence="8" ref="1">
    <original>S</original>
    <variation>T</variation>
    <location>
        <position position="158"/>
    </location>
</feature>
<feature type="sequence conflict" description="In Ref. 1; AAB84100." evidence="8" ref="1">
    <original>E</original>
    <variation>G</variation>
    <location>
        <position position="171"/>
    </location>
</feature>
<feature type="strand" evidence="14">
    <location>
        <begin position="8"/>
        <end position="12"/>
    </location>
</feature>
<feature type="helix" evidence="14">
    <location>
        <begin position="16"/>
        <end position="29"/>
    </location>
</feature>
<feature type="strand" evidence="14">
    <location>
        <begin position="36"/>
        <end position="40"/>
    </location>
</feature>
<feature type="strand" evidence="14">
    <location>
        <begin position="43"/>
        <end position="47"/>
    </location>
</feature>
<feature type="helix" evidence="14">
    <location>
        <begin position="49"/>
        <end position="55"/>
    </location>
</feature>
<feature type="helix" evidence="14">
    <location>
        <begin position="57"/>
        <end position="63"/>
    </location>
</feature>
<feature type="strand" evidence="14">
    <location>
        <begin position="71"/>
        <end position="75"/>
    </location>
</feature>
<feature type="helix" evidence="14">
    <location>
        <begin position="81"/>
        <end position="93"/>
    </location>
</feature>
<feature type="strand" evidence="14">
    <location>
        <begin position="94"/>
        <end position="99"/>
    </location>
</feature>
<feature type="turn" evidence="14">
    <location>
        <begin position="100"/>
        <end position="102"/>
    </location>
</feature>
<feature type="helix" evidence="14">
    <location>
        <begin position="103"/>
        <end position="113"/>
    </location>
</feature>
<feature type="strand" evidence="14">
    <location>
        <begin position="115"/>
        <end position="117"/>
    </location>
</feature>
<feature type="helix" evidence="14">
    <location>
        <begin position="120"/>
        <end position="126"/>
    </location>
</feature>